<name>SSP41_PHAJA</name>
<reference evidence="3" key="1">
    <citation type="journal article" date="2011" name="Toxicon">
        <title>Peptidomic dissection of the skin secretion of Phasmahyla jandaia (Bokermann and Sazima, 1978) (Anura, Hylidae, Phyllomedusinae).</title>
        <authorList>
            <person name="Rates B."/>
            <person name="Silva L.P."/>
            <person name="Ireno I.C."/>
            <person name="Leite F.S."/>
            <person name="Borges M.H."/>
            <person name="Bloch C. Jr."/>
            <person name="De Lima M.E."/>
            <person name="Pimenta A.M."/>
        </authorList>
    </citation>
    <scope>PROTEIN SEQUENCE</scope>
    <scope>SUBCELLULAR LOCATION</scope>
    <scope>TISSUE SPECIFICITY</scope>
    <scope>MASS SPECTROMETRY</scope>
    <source>
        <tissue evidence="1">Skin secretion</tissue>
    </source>
</reference>
<keyword id="KW-0903">Direct protein sequencing</keyword>
<keyword id="KW-0964">Secreted</keyword>
<feature type="peptide" id="PRO_0000404645" description="Skin secreted peptide P4-1" evidence="1">
    <location>
        <begin position="1"/>
        <end position="12"/>
    </location>
</feature>
<feature type="unsure residue" description="K or Q" evidence="1">
    <location>
        <position position="1"/>
    </location>
</feature>
<feature type="unsure residue" description="L or I" evidence="1">
    <location>
        <position position="10"/>
    </location>
</feature>
<dbReference type="GO" id="GO:0005576">
    <property type="term" value="C:extracellular region"/>
    <property type="evidence" value="ECO:0007669"/>
    <property type="project" value="UniProtKB-SubCell"/>
</dbReference>
<organism>
    <name type="scientific">Phasmahyla jandaia</name>
    <name type="common">Jandaia leaf frog</name>
    <name type="synonym">Phyllomedusa jandaia</name>
    <dbReference type="NCBI Taxonomy" id="762504"/>
    <lineage>
        <taxon>Eukaryota</taxon>
        <taxon>Metazoa</taxon>
        <taxon>Chordata</taxon>
        <taxon>Craniata</taxon>
        <taxon>Vertebrata</taxon>
        <taxon>Euteleostomi</taxon>
        <taxon>Amphibia</taxon>
        <taxon>Batrachia</taxon>
        <taxon>Anura</taxon>
        <taxon>Neobatrachia</taxon>
        <taxon>Hyloidea</taxon>
        <taxon>Hylidae</taxon>
        <taxon>Phyllomedusinae</taxon>
        <taxon>Phasmahyla</taxon>
    </lineage>
</organism>
<protein>
    <recommendedName>
        <fullName evidence="2">Skin secreted peptide P4-1</fullName>
        <shortName evidence="2">PjP4-1</shortName>
    </recommendedName>
</protein>
<sequence>KPENENEEALHE</sequence>
<evidence type="ECO:0000269" key="1">
    <source>
    </source>
</evidence>
<evidence type="ECO:0000303" key="2">
    <source>
    </source>
</evidence>
<evidence type="ECO:0000305" key="3"/>
<comment type="subcellular location">
    <subcellularLocation>
        <location evidence="1">Secreted</location>
    </subcellularLocation>
</comment>
<comment type="tissue specificity">
    <text evidence="1">Expressed by the skin glands.</text>
</comment>
<comment type="mass spectrometry"/>
<proteinExistence type="evidence at protein level"/>
<accession>P86608</accession>